<sequence length="112" mass="12835">MTPLAERLKHLSSAEDFLQFFGVPFDQKVVDVCRLHILKRFFQYIRQQASIPQDTEAALFATYRDQLARAYRDFVASTPAEEKVFKVFQDVDGRQHVSVDTLRASLPARGTA</sequence>
<keyword id="KW-0535">Nitrogen fixation</keyword>
<accession>A4JRK7</accession>
<dbReference type="EMBL" id="CP000616">
    <property type="protein sequence ID" value="ABO58910.1"/>
    <property type="molecule type" value="Genomic_DNA"/>
</dbReference>
<dbReference type="SMR" id="A4JRK7"/>
<dbReference type="KEGG" id="bvi:Bcep1808_5985"/>
<dbReference type="eggNOG" id="ENOG50330W8">
    <property type="taxonomic scope" value="Bacteria"/>
</dbReference>
<dbReference type="HOGENOM" id="CLU_145318_1_0_4"/>
<dbReference type="Proteomes" id="UP000002287">
    <property type="component" value="Chromosome 3"/>
</dbReference>
<dbReference type="GO" id="GO:0009399">
    <property type="term" value="P:nitrogen fixation"/>
    <property type="evidence" value="ECO:0007669"/>
    <property type="project" value="UniProtKB-UniRule"/>
</dbReference>
<dbReference type="HAMAP" id="MF_00529">
    <property type="entry name" value="NifW"/>
    <property type="match status" value="1"/>
</dbReference>
<dbReference type="InterPro" id="IPR004893">
    <property type="entry name" value="NifW"/>
</dbReference>
<dbReference type="NCBIfam" id="NF002009">
    <property type="entry name" value="PRK00810.1"/>
    <property type="match status" value="1"/>
</dbReference>
<dbReference type="Pfam" id="PF03206">
    <property type="entry name" value="NifW"/>
    <property type="match status" value="1"/>
</dbReference>
<dbReference type="PIRSF" id="PIRSF005790">
    <property type="entry name" value="NifW"/>
    <property type="match status" value="1"/>
</dbReference>
<name>NIFW_BURVG</name>
<protein>
    <recommendedName>
        <fullName evidence="1">Nitrogenase-stabilizing/protective protein NifW</fullName>
    </recommendedName>
</protein>
<reference key="1">
    <citation type="submission" date="2007-03" db="EMBL/GenBank/DDBJ databases">
        <title>Complete sequence of chromosome 3 of Burkholderia vietnamiensis G4.</title>
        <authorList>
            <consortium name="US DOE Joint Genome Institute"/>
            <person name="Copeland A."/>
            <person name="Lucas S."/>
            <person name="Lapidus A."/>
            <person name="Barry K."/>
            <person name="Detter J.C."/>
            <person name="Glavina del Rio T."/>
            <person name="Hammon N."/>
            <person name="Israni S."/>
            <person name="Dalin E."/>
            <person name="Tice H."/>
            <person name="Pitluck S."/>
            <person name="Chain P."/>
            <person name="Malfatti S."/>
            <person name="Shin M."/>
            <person name="Vergez L."/>
            <person name="Schmutz J."/>
            <person name="Larimer F."/>
            <person name="Land M."/>
            <person name="Hauser L."/>
            <person name="Kyrpides N."/>
            <person name="Tiedje J."/>
            <person name="Richardson P."/>
        </authorList>
    </citation>
    <scope>NUCLEOTIDE SEQUENCE [LARGE SCALE GENOMIC DNA]</scope>
    <source>
        <strain>G4 / LMG 22486</strain>
    </source>
</reference>
<organism>
    <name type="scientific">Burkholderia vietnamiensis (strain G4 / LMG 22486)</name>
    <name type="common">Burkholderia cepacia (strain R1808)</name>
    <dbReference type="NCBI Taxonomy" id="269482"/>
    <lineage>
        <taxon>Bacteria</taxon>
        <taxon>Pseudomonadati</taxon>
        <taxon>Pseudomonadota</taxon>
        <taxon>Betaproteobacteria</taxon>
        <taxon>Burkholderiales</taxon>
        <taxon>Burkholderiaceae</taxon>
        <taxon>Burkholderia</taxon>
        <taxon>Burkholderia cepacia complex</taxon>
    </lineage>
</organism>
<feature type="chain" id="PRO_1000060967" description="Nitrogenase-stabilizing/protective protein NifW">
    <location>
        <begin position="1"/>
        <end position="112"/>
    </location>
</feature>
<gene>
    <name evidence="1" type="primary">nifW</name>
    <name type="ordered locus">Bcep1808_5985</name>
</gene>
<comment type="function">
    <text evidence="1">May protect the nitrogenase Fe-Mo protein from oxidative damage.</text>
</comment>
<comment type="subunit">
    <text evidence="1">Homotrimer; associates with NifD.</text>
</comment>
<comment type="similarity">
    <text evidence="1">Belongs to the NifW family.</text>
</comment>
<proteinExistence type="inferred from homology"/>
<evidence type="ECO:0000255" key="1">
    <source>
        <dbReference type="HAMAP-Rule" id="MF_00529"/>
    </source>
</evidence>